<accession>Q06K61</accession>
<organism evidence="7">
    <name type="scientific">Phlebotomus duboscqi</name>
    <name type="common">Sandfly</name>
    <dbReference type="NCBI Taxonomy" id="37738"/>
    <lineage>
        <taxon>Eukaryota</taxon>
        <taxon>Metazoa</taxon>
        <taxon>Ecdysozoa</taxon>
        <taxon>Arthropoda</taxon>
        <taxon>Hexapoda</taxon>
        <taxon>Insecta</taxon>
        <taxon>Pterygota</taxon>
        <taxon>Neoptera</taxon>
        <taxon>Endopterygota</taxon>
        <taxon>Diptera</taxon>
        <taxon>Nematocera</taxon>
        <taxon>Psychodoidea</taxon>
        <taxon>Psychodidae</taxon>
        <taxon>Phlebotomus</taxon>
        <taxon>Phlebotomus</taxon>
    </lineage>
</organism>
<keyword id="KW-0903">Direct protein sequencing</keyword>
<keyword id="KW-0378">Hydrolase</keyword>
<keyword id="KW-0479">Metal-binding</keyword>
<keyword id="KW-0964">Secreted</keyword>
<keyword id="KW-0732">Signal</keyword>
<reference evidence="7" key="1">
    <citation type="journal article" date="2006" name="BMC Genomics">
        <title>High degree of conservancy among secreted salivary gland proteins from two geographically distant Phlebotomus duboscqi sandflies populations (Mali and Kenya).</title>
        <authorList>
            <person name="Kato H."/>
            <person name="Anderson J.M."/>
            <person name="Kamhawi S."/>
            <person name="Oliveira F."/>
            <person name="Lawyer P.G."/>
            <person name="Pham V.M."/>
            <person name="Sangare C.S."/>
            <person name="Samake S."/>
            <person name="Sissoko I."/>
            <person name="Garfield M."/>
            <person name="Sigutova L."/>
            <person name="Volf P."/>
            <person name="Doumbia S."/>
            <person name="Valenzuela J.G."/>
        </authorList>
    </citation>
    <scope>NUCLEOTIDE SEQUENCE [LARGE SCALE MRNA]</scope>
    <scope>PROTEIN SEQUENCE OF 21-39</scope>
    <scope>TISSUE SPECIFICITY</scope>
</reference>
<reference evidence="5" key="2">
    <citation type="journal article" date="2007" name="J. Exp. Biol.">
        <title>Identification and characterization of a salivary adenosine deaminase from the sand fly Phlebotomus duboscqi, the vector of Leishmania major in sub-Saharan Africa.</title>
        <authorList>
            <person name="Kato H."/>
            <person name="Jochim R.C."/>
            <person name="Lawyer P.G."/>
            <person name="Valenzuela J.G."/>
        </authorList>
    </citation>
    <scope>FUNCTION</scope>
    <scope>CATALYTIC ACTIVITY</scope>
</reference>
<dbReference type="EC" id="3.5.4.4" evidence="3"/>
<dbReference type="EMBL" id="DQ835357">
    <property type="protein sequence ID" value="ABI20162.1"/>
    <property type="molecule type" value="mRNA"/>
</dbReference>
<dbReference type="SMR" id="Q06K61"/>
<dbReference type="GO" id="GO:0005615">
    <property type="term" value="C:extracellular space"/>
    <property type="evidence" value="ECO:0007669"/>
    <property type="project" value="InterPro"/>
</dbReference>
<dbReference type="GO" id="GO:0004000">
    <property type="term" value="F:adenosine deaminase activity"/>
    <property type="evidence" value="ECO:0007669"/>
    <property type="project" value="InterPro"/>
</dbReference>
<dbReference type="GO" id="GO:0046872">
    <property type="term" value="F:metal ion binding"/>
    <property type="evidence" value="ECO:0007669"/>
    <property type="project" value="UniProtKB-KW"/>
</dbReference>
<dbReference type="GO" id="GO:0006154">
    <property type="term" value="P:adenosine catabolic process"/>
    <property type="evidence" value="ECO:0007669"/>
    <property type="project" value="InterPro"/>
</dbReference>
<dbReference type="GO" id="GO:0046103">
    <property type="term" value="P:inosine biosynthetic process"/>
    <property type="evidence" value="ECO:0007669"/>
    <property type="project" value="TreeGrafter"/>
</dbReference>
<dbReference type="CDD" id="cd01321">
    <property type="entry name" value="ADGF"/>
    <property type="match status" value="1"/>
</dbReference>
<dbReference type="FunFam" id="3.20.20.140:FF:000017">
    <property type="entry name" value="Adenosine deaminase 2"/>
    <property type="match status" value="1"/>
</dbReference>
<dbReference type="Gene3D" id="3.20.20.140">
    <property type="entry name" value="Metal-dependent hydrolases"/>
    <property type="match status" value="1"/>
</dbReference>
<dbReference type="InterPro" id="IPR001365">
    <property type="entry name" value="A_deaminase_dom"/>
</dbReference>
<dbReference type="InterPro" id="IPR013659">
    <property type="entry name" value="A_deaminase_N"/>
</dbReference>
<dbReference type="InterPro" id="IPR006331">
    <property type="entry name" value="ADGF"/>
</dbReference>
<dbReference type="InterPro" id="IPR006330">
    <property type="entry name" value="Ado/ade_deaminase"/>
</dbReference>
<dbReference type="InterPro" id="IPR032466">
    <property type="entry name" value="Metal_Hydrolase"/>
</dbReference>
<dbReference type="NCBIfam" id="TIGR01431">
    <property type="entry name" value="adm_rel"/>
    <property type="match status" value="1"/>
</dbReference>
<dbReference type="PANTHER" id="PTHR11409">
    <property type="entry name" value="ADENOSINE DEAMINASE"/>
    <property type="match status" value="1"/>
</dbReference>
<dbReference type="PANTHER" id="PTHR11409:SF39">
    <property type="entry name" value="ADENOSINE DEAMINASE 2"/>
    <property type="match status" value="1"/>
</dbReference>
<dbReference type="Pfam" id="PF00962">
    <property type="entry name" value="A_deaminase"/>
    <property type="match status" value="1"/>
</dbReference>
<dbReference type="Pfam" id="PF08451">
    <property type="entry name" value="A_deaminase_N"/>
    <property type="match status" value="1"/>
</dbReference>
<dbReference type="SUPFAM" id="SSF51556">
    <property type="entry name" value="Metallo-dependent hydrolases"/>
    <property type="match status" value="1"/>
</dbReference>
<gene>
    <name evidence="7" type="primary">M73</name>
</gene>
<proteinExistence type="evidence at protein level"/>
<protein>
    <recommendedName>
        <fullName evidence="4">Adenosine deaminase</fullName>
        <ecNumber evidence="3">3.5.4.4</ecNumber>
    </recommendedName>
    <alternativeName>
        <fullName evidence="4">PduM73</fullName>
    </alternativeName>
</protein>
<feature type="signal peptide" evidence="3">
    <location>
        <begin position="1"/>
        <end position="20"/>
    </location>
</feature>
<feature type="chain" id="PRO_0000460722" description="Adenosine deaminase" evidence="6">
    <location>
        <begin position="21"/>
        <end position="516"/>
    </location>
</feature>
<name>ADA_PHLDU</name>
<comment type="function">
    <text evidence="3">Catalyzes the deamination of adenosine to inosine.</text>
</comment>
<comment type="catalytic activity">
    <reaction evidence="3">
        <text>adenosine + H2O + H(+) = inosine + NH4(+)</text>
        <dbReference type="Rhea" id="RHEA:24408"/>
        <dbReference type="ChEBI" id="CHEBI:15377"/>
        <dbReference type="ChEBI" id="CHEBI:15378"/>
        <dbReference type="ChEBI" id="CHEBI:16335"/>
        <dbReference type="ChEBI" id="CHEBI:17596"/>
        <dbReference type="ChEBI" id="CHEBI:28938"/>
        <dbReference type="EC" id="3.5.4.4"/>
    </reaction>
</comment>
<comment type="cofactor">
    <cofactor evidence="1">
        <name>Zn(2+)</name>
        <dbReference type="ChEBI" id="CHEBI:29105"/>
    </cofactor>
</comment>
<comment type="subcellular location">
    <subcellularLocation>
        <location evidence="5">Secreted</location>
    </subcellularLocation>
</comment>
<comment type="tissue specificity">
    <text evidence="2">Salivary gland (at protein level).</text>
</comment>
<comment type="similarity">
    <text evidence="5">Belongs to the metallo-dependent hydrolases superfamily. Adenosine and AMP deaminases family. ADGF subfamily.</text>
</comment>
<sequence length="516" mass="59518">MFPRLIVWLLAASAVHAVLDISNIKPKRDYENFLQKYAEYADDEVDRSVGSDITLSLKEKFVNQYLMDLKTEELKAGLKNPSQFIPSNHFFSVLDRINSSEIFKIIRRMPKGAILHAHDTALCSTDYVVSITYRDHLWQCADPKTGALQFRFSKESPKNTDTCQWTPVSEERKNQGEEQYNSKLRSQLSLYNTDPINRSRDVDSIWNDFMGLFGVNFGLLTYAPVWKDYYKQFLKEMMEDGVQYLELRGTLPPLYDLDGKIYNEEQVVEIYYNVTEEFKKENSTFIGAKFIYAPVRFVNATGIKTLTTTVKQLHERFPDFLAGFDLVGQEDKGGPLIGFSRELLELPESINFFFHSGETNWNGMTDDNLIAAVTLGTKRIGHGYALFKHPRVLKQVKKDKIAIEVCPISNQVLRLVADMRNHPGSILLANKKYPMVISSDDPSFWEATPLSHDFYMAFMGLASYHQDLRMLKQLAINSLEYSSMTLEEKTNAMKLWEAEWEKFIKELETEVFSLLE</sequence>
<evidence type="ECO:0000250" key="1">
    <source>
        <dbReference type="UniProtKB" id="Q9NZK5"/>
    </source>
</evidence>
<evidence type="ECO:0000269" key="2">
    <source>
    </source>
</evidence>
<evidence type="ECO:0000269" key="3">
    <source>
    </source>
</evidence>
<evidence type="ECO:0000303" key="4">
    <source>
    </source>
</evidence>
<evidence type="ECO:0000305" key="5"/>
<evidence type="ECO:0000305" key="6">
    <source>
    </source>
</evidence>
<evidence type="ECO:0000312" key="7">
    <source>
        <dbReference type="EMBL" id="ABI20162.1"/>
    </source>
</evidence>